<proteinExistence type="inferred from homology"/>
<reference key="1">
    <citation type="journal article" date="1998" name="Nature">
        <title>Deciphering the biology of Mycobacterium tuberculosis from the complete genome sequence.</title>
        <authorList>
            <person name="Cole S.T."/>
            <person name="Brosch R."/>
            <person name="Parkhill J."/>
            <person name="Garnier T."/>
            <person name="Churcher C.M."/>
            <person name="Harris D.E."/>
            <person name="Gordon S.V."/>
            <person name="Eiglmeier K."/>
            <person name="Gas S."/>
            <person name="Barry C.E. III"/>
            <person name="Tekaia F."/>
            <person name="Badcock K."/>
            <person name="Basham D."/>
            <person name="Brown D."/>
            <person name="Chillingworth T."/>
            <person name="Connor R."/>
            <person name="Davies R.M."/>
            <person name="Devlin K."/>
            <person name="Feltwell T."/>
            <person name="Gentles S."/>
            <person name="Hamlin N."/>
            <person name="Holroyd S."/>
            <person name="Hornsby T."/>
            <person name="Jagels K."/>
            <person name="Krogh A."/>
            <person name="McLean J."/>
            <person name="Moule S."/>
            <person name="Murphy L.D."/>
            <person name="Oliver S."/>
            <person name="Osborne J."/>
            <person name="Quail M.A."/>
            <person name="Rajandream M.A."/>
            <person name="Rogers J."/>
            <person name="Rutter S."/>
            <person name="Seeger K."/>
            <person name="Skelton S."/>
            <person name="Squares S."/>
            <person name="Squares R."/>
            <person name="Sulston J.E."/>
            <person name="Taylor K."/>
            <person name="Whitehead S."/>
            <person name="Barrell B.G."/>
        </authorList>
    </citation>
    <scope>NUCLEOTIDE SEQUENCE [LARGE SCALE GENOMIC DNA]</scope>
    <source>
        <strain>ATCC 25618 / H37Rv</strain>
    </source>
</reference>
<evidence type="ECO:0000256" key="1">
    <source>
        <dbReference type="SAM" id="MobiDB-lite"/>
    </source>
</evidence>
<evidence type="ECO:0000305" key="2"/>
<organism>
    <name type="scientific">Mycobacterium tuberculosis (strain ATCC 25618 / H37Rv)</name>
    <dbReference type="NCBI Taxonomy" id="83332"/>
    <lineage>
        <taxon>Bacteria</taxon>
        <taxon>Bacillati</taxon>
        <taxon>Actinomycetota</taxon>
        <taxon>Actinomycetes</taxon>
        <taxon>Mycobacteriales</taxon>
        <taxon>Mycobacteriaceae</taxon>
        <taxon>Mycobacterium</taxon>
        <taxon>Mycobacterium tuberculosis complex</taxon>
    </lineage>
</organism>
<accession>P9WKH7</accession>
<accession>L0TFA3</accession>
<accession>Q10621</accession>
<keyword id="KW-0233">DNA recombination</keyword>
<keyword id="KW-0238">DNA-binding</keyword>
<keyword id="KW-1185">Reference proteome</keyword>
<keyword id="KW-0814">Transposable element</keyword>
<keyword id="KW-0815">Transposition</keyword>
<comment type="similarity">
    <text evidence="2">Belongs to the transposase 12 family.</text>
</comment>
<dbReference type="EMBL" id="AL123456">
    <property type="protein sequence ID" value="CCP44070.1"/>
    <property type="molecule type" value="Genomic_DNA"/>
</dbReference>
<dbReference type="EMBL" id="AL123456">
    <property type="protein sequence ID" value="CCP46627.1"/>
    <property type="molecule type" value="Genomic_DNA"/>
</dbReference>
<dbReference type="PIR" id="E70775">
    <property type="entry name" value="E70775"/>
</dbReference>
<dbReference type="RefSeq" id="NP_215829.1">
    <property type="nucleotide sequence ID" value="NC_000962.3"/>
</dbReference>
<dbReference type="RefSeq" id="NP_218315.1">
    <property type="nucleotide sequence ID" value="NC_000962.3"/>
</dbReference>
<dbReference type="RefSeq" id="WP_003900758.1">
    <property type="nucleotide sequence ID" value="NZ_NVQJ01000110.1"/>
</dbReference>
<dbReference type="SMR" id="P9WKH7"/>
<dbReference type="STRING" id="83332.Rv1313c"/>
<dbReference type="PaxDb" id="83332-Rv1313c"/>
<dbReference type="DNASU" id="23492537"/>
<dbReference type="DNASU" id="886268"/>
<dbReference type="DNASU" id="886922"/>
<dbReference type="GeneID" id="886268"/>
<dbReference type="GeneID" id="886922"/>
<dbReference type="KEGG" id="mtu:Rv1313c"/>
<dbReference type="KEGG" id="mtu:Rv3798"/>
<dbReference type="KEGG" id="mtv:RVBD_1313c"/>
<dbReference type="KEGG" id="mtv:RVBD_3798"/>
<dbReference type="TubercuList" id="Rv1313c"/>
<dbReference type="TubercuList" id="Rv3798"/>
<dbReference type="eggNOG" id="COG3464">
    <property type="taxonomic scope" value="Bacteria"/>
</dbReference>
<dbReference type="InParanoid" id="P9WKH7"/>
<dbReference type="OrthoDB" id="3238779at2"/>
<dbReference type="PhylomeDB" id="P9WKH7"/>
<dbReference type="Proteomes" id="UP000001584">
    <property type="component" value="Chromosome"/>
</dbReference>
<dbReference type="GO" id="GO:0009274">
    <property type="term" value="C:peptidoglycan-based cell wall"/>
    <property type="evidence" value="ECO:0007005"/>
    <property type="project" value="MTBBASE"/>
</dbReference>
<dbReference type="GO" id="GO:0005886">
    <property type="term" value="C:plasma membrane"/>
    <property type="evidence" value="ECO:0007005"/>
    <property type="project" value="MTBBASE"/>
</dbReference>
<dbReference type="GO" id="GO:0003677">
    <property type="term" value="F:DNA binding"/>
    <property type="evidence" value="ECO:0007669"/>
    <property type="project" value="UniProtKB-KW"/>
</dbReference>
<dbReference type="GO" id="GO:0006310">
    <property type="term" value="P:DNA recombination"/>
    <property type="evidence" value="ECO:0007669"/>
    <property type="project" value="UniProtKB-KW"/>
</dbReference>
<dbReference type="GO" id="GO:0032196">
    <property type="term" value="P:transposition"/>
    <property type="evidence" value="ECO:0007669"/>
    <property type="project" value="UniProtKB-KW"/>
</dbReference>
<dbReference type="InterPro" id="IPR047951">
    <property type="entry name" value="Transpos_ISL3"/>
</dbReference>
<dbReference type="InterPro" id="IPR002560">
    <property type="entry name" value="Transposase_DDE"/>
</dbReference>
<dbReference type="InterPro" id="IPR032877">
    <property type="entry name" value="Transposase_HTH"/>
</dbReference>
<dbReference type="InterPro" id="IPR029261">
    <property type="entry name" value="Transposase_Znf"/>
</dbReference>
<dbReference type="NCBIfam" id="NF033550">
    <property type="entry name" value="transpos_ISL3"/>
    <property type="match status" value="1"/>
</dbReference>
<dbReference type="PANTHER" id="PTHR33498">
    <property type="entry name" value="TRANSPOSASE FOR INSERTION SEQUENCE ELEMENT IS1557"/>
    <property type="match status" value="1"/>
</dbReference>
<dbReference type="PANTHER" id="PTHR33498:SF1">
    <property type="entry name" value="TRANSPOSASE FOR INSERTION SEQUENCE ELEMENT IS1557"/>
    <property type="match status" value="1"/>
</dbReference>
<dbReference type="Pfam" id="PF01610">
    <property type="entry name" value="DDE_Tnp_ISL3"/>
    <property type="match status" value="1"/>
</dbReference>
<dbReference type="Pfam" id="PF13542">
    <property type="entry name" value="HTH_Tnp_ISL3"/>
    <property type="match status" value="1"/>
</dbReference>
<dbReference type="Pfam" id="PF14690">
    <property type="entry name" value="Zn_ribbon_ISL3"/>
    <property type="match status" value="1"/>
</dbReference>
<name>TS57_MYCTU</name>
<feature type="chain" id="PRO_0000075450" description="Transposase for insertion sequence element IS1557">
    <location>
        <begin position="1"/>
        <end position="444"/>
    </location>
</feature>
<feature type="region of interest" description="Disordered" evidence="1">
    <location>
        <begin position="273"/>
        <end position="292"/>
    </location>
</feature>
<sequence>MRNVRLFRALLGVDKRTVIEDIEFEEDDAGDGARVIARVRPRSAVLRRCGRCGRKASWYDRGAGLRQWRSLDWGTVEVFLEAEAPRVNCPTHGPTVVAVPWARHHAGHTYAFDDTVAWLAVACSKTAVCELMRIAWRTVGAIVARVWADTEKRIDRFANLRRIGIDEISYKRHHRYLTVVVDHDSGRLVWAAPGHDKATLGLFFDALGAERAAQITHVSADAADWIADVVTERCPDAIQCADPFHVVAWATEALDVERRRAWNDARAIARTEPKWGRGRPGKNAAPRPGRERARRLKGARYALWKNPEDLTERQSAKLAWIAKTDPRLYRAYLLKESLRHVFSVKGEEGKQALDRWISWAQRCRIPVFVELAARIKRHRVAIDAALDHGLSQGLIESTNTKIRLLTRIAFGFRSPQALIALAMLTLAGHRPTLPGRHNHPQISQ</sequence>
<protein>
    <recommendedName>
        <fullName>Transposase for insertion sequence element IS1557</fullName>
    </recommendedName>
</protein>
<gene>
    <name type="ordered locus">Rv1313c</name>
    <name type="ORF">MTCY373.33c</name>
</gene>
<gene>
    <name type="ordered locus">Rv3798</name>
    <name type="ORF">MTV026.03</name>
</gene>